<evidence type="ECO:0000255" key="1">
    <source>
        <dbReference type="HAMAP-Rule" id="MF_00197"/>
    </source>
</evidence>
<gene>
    <name evidence="1" type="primary">dapF</name>
    <name type="ordered locus">APP7_1592</name>
</gene>
<proteinExistence type="inferred from homology"/>
<name>DAPF_ACTP7</name>
<comment type="function">
    <text evidence="1">Catalyzes the stereoinversion of LL-2,6-diaminopimelate (L,L-DAP) to meso-diaminopimelate (meso-DAP), a precursor of L-lysine and an essential component of the bacterial peptidoglycan.</text>
</comment>
<comment type="catalytic activity">
    <reaction evidence="1">
        <text>(2S,6S)-2,6-diaminopimelate = meso-2,6-diaminopimelate</text>
        <dbReference type="Rhea" id="RHEA:15393"/>
        <dbReference type="ChEBI" id="CHEBI:57609"/>
        <dbReference type="ChEBI" id="CHEBI:57791"/>
        <dbReference type="EC" id="5.1.1.7"/>
    </reaction>
</comment>
<comment type="pathway">
    <text evidence="1">Amino-acid biosynthesis; L-lysine biosynthesis via DAP pathway; DL-2,6-diaminopimelate from LL-2,6-diaminopimelate: step 1/1.</text>
</comment>
<comment type="subunit">
    <text evidence="1">Homodimer.</text>
</comment>
<comment type="subcellular location">
    <subcellularLocation>
        <location evidence="1">Cytoplasm</location>
    </subcellularLocation>
</comment>
<comment type="similarity">
    <text evidence="1">Belongs to the diaminopimelate epimerase family.</text>
</comment>
<sequence length="274" mass="30368">MQFSKMHGLGNDFMVIDGVTQNVYLTEDVIRKLADRHRGVGFDQLLLVEPPYDPELDFHYRIFNADGSEVAQCGNGARCFARFVTLKGLTNKQDIHVSTAKGKMVLTLKDEEKVRVNMGEPIWEPAQVPFTANKFEKNYILRTDLQTVLCGVVSMGNPHCVLQVEDINLAPVNELGPLLENHERFPERANIGFMQVVNRNHIKLRVFERGAGETQACGSGACGAVAVGIMQGVLDNNVQVDLPGGSLQIEWEGVGHPLYMTGDATHIYDGFIKL</sequence>
<accession>B3GYL3</accession>
<feature type="chain" id="PRO_1000099216" description="Diaminopimelate epimerase">
    <location>
        <begin position="1"/>
        <end position="274"/>
    </location>
</feature>
<feature type="active site" description="Proton donor" evidence="1">
    <location>
        <position position="73"/>
    </location>
</feature>
<feature type="active site" description="Proton acceptor" evidence="1">
    <location>
        <position position="217"/>
    </location>
</feature>
<feature type="binding site" evidence="1">
    <location>
        <position position="11"/>
    </location>
    <ligand>
        <name>substrate</name>
    </ligand>
</feature>
<feature type="binding site" evidence="1">
    <location>
        <position position="44"/>
    </location>
    <ligand>
        <name>substrate</name>
    </ligand>
</feature>
<feature type="binding site" evidence="1">
    <location>
        <position position="64"/>
    </location>
    <ligand>
        <name>substrate</name>
    </ligand>
</feature>
<feature type="binding site" evidence="1">
    <location>
        <begin position="74"/>
        <end position="75"/>
    </location>
    <ligand>
        <name>substrate</name>
    </ligand>
</feature>
<feature type="binding site" evidence="1">
    <location>
        <position position="157"/>
    </location>
    <ligand>
        <name>substrate</name>
    </ligand>
</feature>
<feature type="binding site" evidence="1">
    <location>
        <position position="190"/>
    </location>
    <ligand>
        <name>substrate</name>
    </ligand>
</feature>
<feature type="binding site" evidence="1">
    <location>
        <begin position="208"/>
        <end position="209"/>
    </location>
    <ligand>
        <name>substrate</name>
    </ligand>
</feature>
<feature type="binding site" evidence="1">
    <location>
        <begin position="218"/>
        <end position="219"/>
    </location>
    <ligand>
        <name>substrate</name>
    </ligand>
</feature>
<feature type="site" description="Could be important to modulate the pK values of the two catalytic cysteine residues" evidence="1">
    <location>
        <position position="159"/>
    </location>
</feature>
<feature type="site" description="Could be important to modulate the pK values of the two catalytic cysteine residues" evidence="1">
    <location>
        <position position="208"/>
    </location>
</feature>
<feature type="site" description="Important for dimerization" evidence="1">
    <location>
        <position position="268"/>
    </location>
</feature>
<reference key="1">
    <citation type="submission" date="2008-06" db="EMBL/GenBank/DDBJ databases">
        <title>Genome and proteome analysis of A. pleuropneumoniae serotype 7.</title>
        <authorList>
            <person name="Linke B."/>
            <person name="Buettner F."/>
            <person name="Martinez-Arias R."/>
            <person name="Goesmann A."/>
            <person name="Baltes N."/>
            <person name="Tegetmeyer H."/>
            <person name="Singh M."/>
            <person name="Gerlach G.F."/>
        </authorList>
    </citation>
    <scope>NUCLEOTIDE SEQUENCE [LARGE SCALE GENOMIC DNA]</scope>
    <source>
        <strain>AP76</strain>
    </source>
</reference>
<protein>
    <recommendedName>
        <fullName evidence="1">Diaminopimelate epimerase</fullName>
        <shortName evidence="1">DAP epimerase</shortName>
        <ecNumber evidence="1">5.1.1.7</ecNumber>
    </recommendedName>
    <alternativeName>
        <fullName evidence="1">PLP-independent amino acid racemase</fullName>
    </alternativeName>
</protein>
<dbReference type="EC" id="5.1.1.7" evidence="1"/>
<dbReference type="EMBL" id="CP001091">
    <property type="protein sequence ID" value="ACE62244.1"/>
    <property type="molecule type" value="Genomic_DNA"/>
</dbReference>
<dbReference type="RefSeq" id="WP_005617994.1">
    <property type="nucleotide sequence ID" value="NC_010939.1"/>
</dbReference>
<dbReference type="SMR" id="B3GYL3"/>
<dbReference type="KEGG" id="apa:APP7_1592"/>
<dbReference type="HOGENOM" id="CLU_053306_1_1_6"/>
<dbReference type="UniPathway" id="UPA00034">
    <property type="reaction ID" value="UER00025"/>
</dbReference>
<dbReference type="Proteomes" id="UP000001226">
    <property type="component" value="Chromosome"/>
</dbReference>
<dbReference type="GO" id="GO:0005829">
    <property type="term" value="C:cytosol"/>
    <property type="evidence" value="ECO:0007669"/>
    <property type="project" value="TreeGrafter"/>
</dbReference>
<dbReference type="GO" id="GO:0008837">
    <property type="term" value="F:diaminopimelate epimerase activity"/>
    <property type="evidence" value="ECO:0007669"/>
    <property type="project" value="UniProtKB-UniRule"/>
</dbReference>
<dbReference type="GO" id="GO:0009089">
    <property type="term" value="P:lysine biosynthetic process via diaminopimelate"/>
    <property type="evidence" value="ECO:0007669"/>
    <property type="project" value="UniProtKB-UniRule"/>
</dbReference>
<dbReference type="FunFam" id="3.10.310.10:FF:000001">
    <property type="entry name" value="Diaminopimelate epimerase"/>
    <property type="match status" value="1"/>
</dbReference>
<dbReference type="FunFam" id="3.10.310.10:FF:000002">
    <property type="entry name" value="Diaminopimelate epimerase"/>
    <property type="match status" value="1"/>
</dbReference>
<dbReference type="Gene3D" id="3.10.310.10">
    <property type="entry name" value="Diaminopimelate Epimerase, Chain A, domain 1"/>
    <property type="match status" value="2"/>
</dbReference>
<dbReference type="HAMAP" id="MF_00197">
    <property type="entry name" value="DAP_epimerase"/>
    <property type="match status" value="1"/>
</dbReference>
<dbReference type="InterPro" id="IPR018510">
    <property type="entry name" value="DAP_epimerase_AS"/>
</dbReference>
<dbReference type="InterPro" id="IPR001653">
    <property type="entry name" value="DAP_epimerase_DapF"/>
</dbReference>
<dbReference type="NCBIfam" id="TIGR00652">
    <property type="entry name" value="DapF"/>
    <property type="match status" value="1"/>
</dbReference>
<dbReference type="PANTHER" id="PTHR31689:SF0">
    <property type="entry name" value="DIAMINOPIMELATE EPIMERASE"/>
    <property type="match status" value="1"/>
</dbReference>
<dbReference type="PANTHER" id="PTHR31689">
    <property type="entry name" value="DIAMINOPIMELATE EPIMERASE, CHLOROPLASTIC"/>
    <property type="match status" value="1"/>
</dbReference>
<dbReference type="Pfam" id="PF01678">
    <property type="entry name" value="DAP_epimerase"/>
    <property type="match status" value="2"/>
</dbReference>
<dbReference type="SUPFAM" id="SSF54506">
    <property type="entry name" value="Diaminopimelate epimerase-like"/>
    <property type="match status" value="1"/>
</dbReference>
<dbReference type="PROSITE" id="PS01326">
    <property type="entry name" value="DAP_EPIMERASE"/>
    <property type="match status" value="1"/>
</dbReference>
<keyword id="KW-0028">Amino-acid biosynthesis</keyword>
<keyword id="KW-0963">Cytoplasm</keyword>
<keyword id="KW-0413">Isomerase</keyword>
<keyword id="KW-0457">Lysine biosynthesis</keyword>
<organism>
    <name type="scientific">Actinobacillus pleuropneumoniae serotype 7 (strain AP76)</name>
    <dbReference type="NCBI Taxonomy" id="537457"/>
    <lineage>
        <taxon>Bacteria</taxon>
        <taxon>Pseudomonadati</taxon>
        <taxon>Pseudomonadota</taxon>
        <taxon>Gammaproteobacteria</taxon>
        <taxon>Pasteurellales</taxon>
        <taxon>Pasteurellaceae</taxon>
        <taxon>Actinobacillus</taxon>
    </lineage>
</organism>